<organism>
    <name type="scientific">Arabidopsis thaliana</name>
    <name type="common">Mouse-ear cress</name>
    <dbReference type="NCBI Taxonomy" id="3702"/>
    <lineage>
        <taxon>Eukaryota</taxon>
        <taxon>Viridiplantae</taxon>
        <taxon>Streptophyta</taxon>
        <taxon>Embryophyta</taxon>
        <taxon>Tracheophyta</taxon>
        <taxon>Spermatophyta</taxon>
        <taxon>Magnoliopsida</taxon>
        <taxon>eudicotyledons</taxon>
        <taxon>Gunneridae</taxon>
        <taxon>Pentapetalae</taxon>
        <taxon>rosids</taxon>
        <taxon>malvids</taxon>
        <taxon>Brassicales</taxon>
        <taxon>Brassicaceae</taxon>
        <taxon>Camelineae</taxon>
        <taxon>Arabidopsis</taxon>
    </lineage>
</organism>
<sequence length="469" mass="51653">MSEEVPQQFPSSKRQLHPSLSSMKPPLVAPGEYHRFDAAETRGGGAVADQVVSDAIVIKSTLKRKTDLVNQIVEVNELNTGVLQTPVSGKGGKAKKTSRSAKSNKSGTLASGSNAGSPGNNFAQAGTCRYDSSLGLLTKKFINLIKQAEDGILDLNKAADTLEVQKRRIYDITNVLEGIGLIEKTLKNRIQWKGLDVSKPGETIESIANLQDEVQNLAAEEARLDDQIRESQERLTSLSEDENNKRLLFVTENDIKNLPCFQNKTLIAVKAPHGTTLEVPDPDEAGGYQRRYRIILRSTMGPIDVYLVSQFEESFEDIPQADEPSNVPDEPSNVPDVPSNLPSTSGLPENHDVSMPMKEESTERNMETQEVDDTQRVYSDIESHDFVDGIMKIVPPDLDMGVDYWFRSEVGEVSITDMWPDESGPDWNQMITFDQDHAGPSDNKILEQPQTPSSPTPEESTATRSPTGS</sequence>
<name>E2FB_ARATH</name>
<reference key="1">
    <citation type="journal article" date="2000" name="FEBS Lett.">
        <title>Characterization of two distinct DP-related genes from Arabidopsis thaliana.</title>
        <authorList>
            <person name="Magyar Z."/>
            <person name="Atanassova A."/>
            <person name="De Veylder L."/>
            <person name="Rombauts S."/>
            <person name="Inze D."/>
        </authorList>
    </citation>
    <scope>NUCLEOTIDE SEQUENCE [MRNA] (ISOFORM 1)</scope>
    <scope>INTERACTION WITH DPA AND DPB</scope>
</reference>
<reference key="2">
    <citation type="journal article" date="2001" name="Plant Mol. Biol.">
        <title>Arabidopsis E2F1 binds a sequence present in the promoter of S-phase-regulated gene AtCDC6 and is a member of a multigene family with differential activities.</title>
        <authorList>
            <person name="de Jager S.M."/>
            <person name="Menges M."/>
            <person name="Bauer U.M."/>
            <person name="Murra J.A."/>
        </authorList>
    </citation>
    <scope>NUCLEOTIDE SEQUENCE [MRNA] (ISOFORM 1)</scope>
    <scope>FUNCTION</scope>
    <scope>INTERACTION WITH MAIZE RBR1</scope>
    <scope>DEVELOPMENTAL STAGE</scope>
    <source>
        <strain>cv. Columbia</strain>
    </source>
</reference>
<reference key="3">
    <citation type="journal article" date="2000" name="Nature">
        <title>Sequence and analysis of chromosome 5 of the plant Arabidopsis thaliana.</title>
        <authorList>
            <person name="Tabata S."/>
            <person name="Kaneko T."/>
            <person name="Nakamura Y."/>
            <person name="Kotani H."/>
            <person name="Kato T."/>
            <person name="Asamizu E."/>
            <person name="Miyajima N."/>
            <person name="Sasamoto S."/>
            <person name="Kimura T."/>
            <person name="Hosouchi T."/>
            <person name="Kawashima K."/>
            <person name="Kohara M."/>
            <person name="Matsumoto M."/>
            <person name="Matsuno A."/>
            <person name="Muraki A."/>
            <person name="Nakayama S."/>
            <person name="Nakazaki N."/>
            <person name="Naruo K."/>
            <person name="Okumura S."/>
            <person name="Shinpo S."/>
            <person name="Takeuchi C."/>
            <person name="Wada T."/>
            <person name="Watanabe A."/>
            <person name="Yamada M."/>
            <person name="Yasuda M."/>
            <person name="Sato S."/>
            <person name="de la Bastide M."/>
            <person name="Huang E."/>
            <person name="Spiegel L."/>
            <person name="Gnoj L."/>
            <person name="O'Shaughnessy A."/>
            <person name="Preston R."/>
            <person name="Habermann K."/>
            <person name="Murray J."/>
            <person name="Johnson D."/>
            <person name="Rohlfing T."/>
            <person name="Nelson J."/>
            <person name="Stoneking T."/>
            <person name="Pepin K."/>
            <person name="Spieth J."/>
            <person name="Sekhon M."/>
            <person name="Armstrong J."/>
            <person name="Becker M."/>
            <person name="Belter E."/>
            <person name="Cordum H."/>
            <person name="Cordes M."/>
            <person name="Courtney L."/>
            <person name="Courtney W."/>
            <person name="Dante M."/>
            <person name="Du H."/>
            <person name="Edwards J."/>
            <person name="Fryman J."/>
            <person name="Haakensen B."/>
            <person name="Lamar E."/>
            <person name="Latreille P."/>
            <person name="Leonard S."/>
            <person name="Meyer R."/>
            <person name="Mulvaney E."/>
            <person name="Ozersky P."/>
            <person name="Riley A."/>
            <person name="Strowmatt C."/>
            <person name="Wagner-McPherson C."/>
            <person name="Wollam A."/>
            <person name="Yoakum M."/>
            <person name="Bell M."/>
            <person name="Dedhia N."/>
            <person name="Parnell L."/>
            <person name="Shah R."/>
            <person name="Rodriguez M."/>
            <person name="Hoon See L."/>
            <person name="Vil D."/>
            <person name="Baker J."/>
            <person name="Kirchoff K."/>
            <person name="Toth K."/>
            <person name="King L."/>
            <person name="Bahret A."/>
            <person name="Miller B."/>
            <person name="Marra M.A."/>
            <person name="Martienssen R."/>
            <person name="McCombie W.R."/>
            <person name="Wilson R.K."/>
            <person name="Murphy G."/>
            <person name="Bancroft I."/>
            <person name="Volckaert G."/>
            <person name="Wambutt R."/>
            <person name="Duesterhoeft A."/>
            <person name="Stiekema W."/>
            <person name="Pohl T."/>
            <person name="Entian K.-D."/>
            <person name="Terryn N."/>
            <person name="Hartley N."/>
            <person name="Bent E."/>
            <person name="Johnson S."/>
            <person name="Langham S.-A."/>
            <person name="McCullagh B."/>
            <person name="Robben J."/>
            <person name="Grymonprez B."/>
            <person name="Zimmermann W."/>
            <person name="Ramsperger U."/>
            <person name="Wedler H."/>
            <person name="Balke K."/>
            <person name="Wedler E."/>
            <person name="Peters S."/>
            <person name="van Staveren M."/>
            <person name="Dirkse W."/>
            <person name="Mooijman P."/>
            <person name="Klein Lankhorst R."/>
            <person name="Weitzenegger T."/>
            <person name="Bothe G."/>
            <person name="Rose M."/>
            <person name="Hauf J."/>
            <person name="Berneiser S."/>
            <person name="Hempel S."/>
            <person name="Feldpausch M."/>
            <person name="Lamberth S."/>
            <person name="Villarroel R."/>
            <person name="Gielen J."/>
            <person name="Ardiles W."/>
            <person name="Bents O."/>
            <person name="Lemcke K."/>
            <person name="Kolesov G."/>
            <person name="Mayer K.F.X."/>
            <person name="Rudd S."/>
            <person name="Schoof H."/>
            <person name="Schueller C."/>
            <person name="Zaccaria P."/>
            <person name="Mewes H.-W."/>
            <person name="Bevan M."/>
            <person name="Fransz P.F."/>
        </authorList>
    </citation>
    <scope>NUCLEOTIDE SEQUENCE [LARGE SCALE GENOMIC DNA]</scope>
    <source>
        <strain>cv. Columbia</strain>
    </source>
</reference>
<reference key="4">
    <citation type="journal article" date="1997" name="DNA Res.">
        <title>Structural analysis of Arabidopsis thaliana chromosome 5. III. Sequence features of the regions of 1,191,918 bp covered by seventeen physically assigned P1 clones.</title>
        <authorList>
            <person name="Nakamura Y."/>
            <person name="Sato S."/>
            <person name="Kaneko T."/>
            <person name="Kotani H."/>
            <person name="Asamizu E."/>
            <person name="Miyajima N."/>
            <person name="Tabata S."/>
        </authorList>
    </citation>
    <scope>NUCLEOTIDE SEQUENCE [LARGE SCALE GENOMIC DNA] OF 62-469</scope>
</reference>
<reference key="5">
    <citation type="journal article" date="2017" name="Plant J.">
        <title>Araport11: a complete reannotation of the Arabidopsis thaliana reference genome.</title>
        <authorList>
            <person name="Cheng C.Y."/>
            <person name="Krishnakumar V."/>
            <person name="Chan A.P."/>
            <person name="Thibaud-Nissen F."/>
            <person name="Schobel S."/>
            <person name="Town C.D."/>
        </authorList>
    </citation>
    <scope>GENOME REANNOTATION</scope>
    <source>
        <strain>cv. Columbia</strain>
    </source>
</reference>
<reference key="6">
    <citation type="journal article" date="2003" name="Science">
        <title>Empirical analysis of transcriptional activity in the Arabidopsis genome.</title>
        <authorList>
            <person name="Yamada K."/>
            <person name="Lim J."/>
            <person name="Dale J.M."/>
            <person name="Chen H."/>
            <person name="Shinn P."/>
            <person name="Palm C.J."/>
            <person name="Southwick A.M."/>
            <person name="Wu H.C."/>
            <person name="Kim C.J."/>
            <person name="Nguyen M."/>
            <person name="Pham P.K."/>
            <person name="Cheuk R.F."/>
            <person name="Karlin-Newmann G."/>
            <person name="Liu S.X."/>
            <person name="Lam B."/>
            <person name="Sakano H."/>
            <person name="Wu T."/>
            <person name="Yu G."/>
            <person name="Miranda M."/>
            <person name="Quach H.L."/>
            <person name="Tripp M."/>
            <person name="Chang C.H."/>
            <person name="Lee J.M."/>
            <person name="Toriumi M.J."/>
            <person name="Chan M.M."/>
            <person name="Tang C.C."/>
            <person name="Onodera C.S."/>
            <person name="Deng J.M."/>
            <person name="Akiyama K."/>
            <person name="Ansari Y."/>
            <person name="Arakawa T."/>
            <person name="Banh J."/>
            <person name="Banno F."/>
            <person name="Bowser L."/>
            <person name="Brooks S.Y."/>
            <person name="Carninci P."/>
            <person name="Chao Q."/>
            <person name="Choy N."/>
            <person name="Enju A."/>
            <person name="Goldsmith A.D."/>
            <person name="Gurjal M."/>
            <person name="Hansen N.F."/>
            <person name="Hayashizaki Y."/>
            <person name="Johnson-Hopson C."/>
            <person name="Hsuan V.W."/>
            <person name="Iida K."/>
            <person name="Karnes M."/>
            <person name="Khan S."/>
            <person name="Koesema E."/>
            <person name="Ishida J."/>
            <person name="Jiang P.X."/>
            <person name="Jones T."/>
            <person name="Kawai J."/>
            <person name="Kamiya A."/>
            <person name="Meyers C."/>
            <person name="Nakajima M."/>
            <person name="Narusaka M."/>
            <person name="Seki M."/>
            <person name="Sakurai T."/>
            <person name="Satou M."/>
            <person name="Tamse R."/>
            <person name="Vaysberg M."/>
            <person name="Wallender E.K."/>
            <person name="Wong C."/>
            <person name="Yamamura Y."/>
            <person name="Yuan S."/>
            <person name="Shinozaki K."/>
            <person name="Davis R.W."/>
            <person name="Theologis A."/>
            <person name="Ecker J.R."/>
        </authorList>
    </citation>
    <scope>NUCLEOTIDE SEQUENCE [LARGE SCALE MRNA] (ISOFORM 1)</scope>
    <source>
        <strain>cv. Columbia</strain>
    </source>
</reference>
<reference key="7">
    <citation type="journal article" date="2002" name="J. Biol. Chem.">
        <title>The E2F family of transcription factors from Arabidopsis thaliana. Novel and conserved components of the retinoblastoma/E2F pathway in plants.</title>
        <authorList>
            <person name="Mariconti L."/>
            <person name="Pellegrini B."/>
            <person name="Cantoni R."/>
            <person name="Stevens R."/>
            <person name="Bergounioux C."/>
            <person name="Cella R."/>
            <person name="Albani D."/>
        </authorList>
    </citation>
    <scope>FUNCTION</scope>
    <scope>INTERACTION WITH DPA AND DPB</scope>
    <scope>DEVELOPMENTAL STAGE</scope>
    <scope>GENE FAMILY</scope>
    <scope>NOMENCLATURE</scope>
</reference>
<reference key="8">
    <citation type="journal article" date="2002" name="Mol. Genet. Genomics">
        <title>AtE2F-a and AtDP-a, members of the E2F family of transcription factors, induce Arabidopsis leaf cells to re-enter S phase.</title>
        <authorList>
            <person name="Rossignol P."/>
            <person name="Stevens R."/>
            <person name="Perennes C."/>
            <person name="Jasinski S."/>
            <person name="Cella R."/>
            <person name="Tremousaygue D."/>
            <person name="Bergounioux C."/>
        </authorList>
    </citation>
    <scope>FUNCTION</scope>
    <scope>INTERACTION WITH PURA1</scope>
</reference>
<reference key="9">
    <citation type="journal article" date="2002" name="Plant Cell">
        <title>Genome-wide analysis of core cell cycle genes in Arabidopsis.</title>
        <authorList>
            <person name="Vandepoele K."/>
            <person name="Raes J."/>
            <person name="de Veylder L."/>
            <person name="Rouze P."/>
            <person name="Rombauts S."/>
            <person name="Inze D."/>
        </authorList>
    </citation>
    <scope>GENE FAMILY</scope>
    <scope>NOMENCLATURE</scope>
</reference>
<reference key="10">
    <citation type="journal article" date="2002" name="Plant Physiol.">
        <title>Interaction of the Arabidopsis E2F and DP proteins confers their concomitant nuclear translocation and transactivation.</title>
        <authorList>
            <person name="Kosugi S."/>
            <person name="Ohashi Y."/>
        </authorList>
    </citation>
    <scope>FUNCTION</scope>
    <scope>SUBCELLULAR LOCATION</scope>
    <scope>INTERACTION WITH DPA AND DPB</scope>
    <source>
        <strain>cv. Columbia</strain>
    </source>
</reference>
<reference key="11">
    <citation type="journal article" date="2003" name="Plant Physiol.">
        <title>Constitutive E2F expression in tobacco plants exhibits altered cell cycle control and morphological change in a cell type-specific manner.</title>
        <authorList>
            <person name="Kosugi S."/>
            <person name="Ohashi Y."/>
        </authorList>
    </citation>
    <scope>FUNCTION</scope>
</reference>
<reference key="12">
    <citation type="journal article" date="2005" name="Plant Cell">
        <title>The role of the Arabidopsis E2FB transcription factor in regulating auxin-dependent cell division.</title>
        <authorList>
            <person name="Magyar Z."/>
            <person name="De Veylder L."/>
            <person name="Atanassova A."/>
            <person name="Bako L."/>
            <person name="Inze D."/>
            <person name="Boegre L."/>
        </authorList>
    </citation>
    <scope>FUNCTION</scope>
    <scope>INDUCTION BY AUXIN</scope>
    <scope>PHOSPHORYLATION</scope>
    <scope>INTERACTION WITH DPA AND RBR1</scope>
</reference>
<reference key="13">
    <citation type="journal article" date="2006" name="Plant Physiol.">
        <title>Interplay between Arabidopsis activating factors E2Fb and E2Fa in cell cycle progression and development.</title>
        <authorList>
            <person name="Sozzani R."/>
            <person name="Maggio C."/>
            <person name="Varotto S."/>
            <person name="Canova S."/>
            <person name="Bergounioux C."/>
            <person name="Albani D."/>
            <person name="Cella R."/>
        </authorList>
    </citation>
    <scope>FUNCTION</scope>
    <scope>TISSUE SPECIFICITY</scope>
    <scope>SUBCELLULAR LOCATION</scope>
    <scope>INDUCTION</scope>
    <scope>DEVELOPMENTAL STAGE</scope>
</reference>
<reference key="14">
    <citation type="journal article" date="2008" name="Plant Cell">
        <title>Distinct light-initiated gene expression and cell cycle programs in the shoot apex and cotyledons of Arabidopsis.</title>
        <authorList>
            <person name="Lopez-Juez E."/>
            <person name="Dillon E."/>
            <person name="Magyar Z."/>
            <person name="Khan S."/>
            <person name="Hazeldine S."/>
            <person name="de Jager S.M."/>
            <person name="Murray J.A."/>
            <person name="Beemster G.T."/>
            <person name="Boegre L."/>
            <person name="Shanahan H."/>
        </authorList>
    </citation>
    <scope>INDUCTION BY LIGHT</scope>
</reference>
<reference key="15">
    <citation type="journal article" date="2015" name="EMBO J.">
        <title>Transcriptional repression by MYB3R proteins regulates plant organ growth.</title>
        <authorList>
            <person name="Kobayashi K."/>
            <person name="Suzuki T."/>
            <person name="Iwata E."/>
            <person name="Nakamichi N."/>
            <person name="Suzuki T."/>
            <person name="Chen P."/>
            <person name="Ohtani M."/>
            <person name="Ishida T."/>
            <person name="Hosoya H."/>
            <person name="Mueller S."/>
            <person name="Leviczky T."/>
            <person name="Pettko-Szandtner A."/>
            <person name="Darula Z."/>
            <person name="Iwamoto A."/>
            <person name="Nomoto M."/>
            <person name="Tada Y."/>
            <person name="Higashiyama T."/>
            <person name="Demura T."/>
            <person name="Doonan J.H."/>
            <person name="Hauser M.T."/>
            <person name="Sugimoto K."/>
            <person name="Umeda M."/>
            <person name="Magyar Z."/>
            <person name="Boegre L."/>
            <person name="Ito M."/>
        </authorList>
    </citation>
    <scope>INTERACTION WITH MYB3R4</scope>
    <source>
        <strain>cv. Columbia</strain>
    </source>
</reference>
<proteinExistence type="evidence at protein level"/>
<gene>
    <name type="primary">E2FB</name>
    <name type="synonym">E2F1</name>
    <name type="ordered locus">At5g22220</name>
    <name type="ORF">T6G21</name>
</gene>
<dbReference type="EMBL" id="AJ294533">
    <property type="protein sequence ID" value="CAC15485.1"/>
    <property type="molecule type" value="mRNA"/>
</dbReference>
<dbReference type="EMBL" id="AF242580">
    <property type="protein sequence ID" value="AAG17608.1"/>
    <property type="molecule type" value="mRNA"/>
</dbReference>
<dbReference type="EMBL" id="AL589883">
    <property type="protein sequence ID" value="CAC34515.1"/>
    <property type="molecule type" value="Genomic_DNA"/>
</dbReference>
<dbReference type="EMBL" id="AB007651">
    <property type="protein sequence ID" value="BAB17029.1"/>
    <property type="status" value="ALT_SEQ"/>
    <property type="molecule type" value="Genomic_DNA"/>
</dbReference>
<dbReference type="EMBL" id="CP002688">
    <property type="protein sequence ID" value="AED92998.1"/>
    <property type="molecule type" value="Genomic_DNA"/>
</dbReference>
<dbReference type="EMBL" id="CP002688">
    <property type="protein sequence ID" value="AED92999.1"/>
    <property type="molecule type" value="Genomic_DNA"/>
</dbReference>
<dbReference type="EMBL" id="AY136479">
    <property type="protein sequence ID" value="AAM97144.1"/>
    <property type="molecule type" value="mRNA"/>
</dbReference>
<dbReference type="EMBL" id="BT006610">
    <property type="protein sequence ID" value="AAP31954.1"/>
    <property type="molecule type" value="mRNA"/>
</dbReference>
<dbReference type="RefSeq" id="NP_001031921.3">
    <molecule id="Q9FV71-2"/>
    <property type="nucleotide sequence ID" value="NM_001036844.3"/>
</dbReference>
<dbReference type="RefSeq" id="NP_568413.1">
    <molecule id="Q9FV71-1"/>
    <property type="nucleotide sequence ID" value="NM_122128.3"/>
</dbReference>
<dbReference type="SMR" id="Q9FV71"/>
<dbReference type="BioGRID" id="17558">
    <property type="interactions" value="9"/>
</dbReference>
<dbReference type="FunCoup" id="Q9FV71">
    <property type="interactions" value="1759"/>
</dbReference>
<dbReference type="IntAct" id="Q9FV71">
    <property type="interactions" value="11"/>
</dbReference>
<dbReference type="MINT" id="Q9FV71"/>
<dbReference type="STRING" id="3702.Q9FV71"/>
<dbReference type="GlyGen" id="Q9FV71">
    <property type="glycosylation" value="1 site"/>
</dbReference>
<dbReference type="iPTMnet" id="Q9FV71"/>
<dbReference type="PaxDb" id="3702-AT5G22220.2"/>
<dbReference type="ProteomicsDB" id="222033">
    <molecule id="Q9FV71-1"/>
</dbReference>
<dbReference type="EnsemblPlants" id="AT5G22220.2">
    <molecule id="Q9FV71-1"/>
    <property type="protein sequence ID" value="AT5G22220.2"/>
    <property type="gene ID" value="AT5G22220"/>
</dbReference>
<dbReference type="EnsemblPlants" id="AT5G22220.3">
    <molecule id="Q9FV71-2"/>
    <property type="protein sequence ID" value="AT5G22220.3"/>
    <property type="gene ID" value="AT5G22220"/>
</dbReference>
<dbReference type="GeneID" id="832283"/>
<dbReference type="Gramene" id="AT5G22220.2">
    <molecule id="Q9FV71-1"/>
    <property type="protein sequence ID" value="AT5G22220.2"/>
    <property type="gene ID" value="AT5G22220"/>
</dbReference>
<dbReference type="Gramene" id="AT5G22220.3">
    <molecule id="Q9FV71-2"/>
    <property type="protein sequence ID" value="AT5G22220.3"/>
    <property type="gene ID" value="AT5G22220"/>
</dbReference>
<dbReference type="KEGG" id="ath:AT5G22220"/>
<dbReference type="Araport" id="AT5G22220"/>
<dbReference type="TAIR" id="AT5G22220">
    <property type="gene designation" value="E2F1"/>
</dbReference>
<dbReference type="eggNOG" id="KOG2577">
    <property type="taxonomic scope" value="Eukaryota"/>
</dbReference>
<dbReference type="InParanoid" id="Q9FV71"/>
<dbReference type="OMA" id="RIQWKGQ"/>
<dbReference type="OrthoDB" id="1743261at2759"/>
<dbReference type="PhylomeDB" id="Q9FV71"/>
<dbReference type="PRO" id="PR:Q9FV71"/>
<dbReference type="Proteomes" id="UP000006548">
    <property type="component" value="Chromosome 5"/>
</dbReference>
<dbReference type="ExpressionAtlas" id="Q9FV71">
    <property type="expression patterns" value="baseline and differential"/>
</dbReference>
<dbReference type="GO" id="GO:0005737">
    <property type="term" value="C:cytoplasm"/>
    <property type="evidence" value="ECO:0000314"/>
    <property type="project" value="TAIR"/>
</dbReference>
<dbReference type="GO" id="GO:0070176">
    <property type="term" value="C:DRM complex"/>
    <property type="evidence" value="ECO:0000314"/>
    <property type="project" value="TAIR"/>
</dbReference>
<dbReference type="GO" id="GO:0005634">
    <property type="term" value="C:nucleus"/>
    <property type="evidence" value="ECO:0000314"/>
    <property type="project" value="TAIR"/>
</dbReference>
<dbReference type="GO" id="GO:0003677">
    <property type="term" value="F:DNA binding"/>
    <property type="evidence" value="ECO:0000314"/>
    <property type="project" value="UniProtKB"/>
</dbReference>
<dbReference type="GO" id="GO:0003700">
    <property type="term" value="F:DNA-binding transcription factor activity"/>
    <property type="evidence" value="ECO:0000314"/>
    <property type="project" value="TAIR"/>
</dbReference>
<dbReference type="GO" id="GO:0046983">
    <property type="term" value="F:protein dimerization activity"/>
    <property type="evidence" value="ECO:0007669"/>
    <property type="project" value="InterPro"/>
</dbReference>
<dbReference type="GO" id="GO:0000978">
    <property type="term" value="F:RNA polymerase II cis-regulatory region sequence-specific DNA binding"/>
    <property type="evidence" value="ECO:0007669"/>
    <property type="project" value="InterPro"/>
</dbReference>
<dbReference type="GO" id="GO:0008284">
    <property type="term" value="P:positive regulation of cell population proliferation"/>
    <property type="evidence" value="ECO:0000315"/>
    <property type="project" value="UniProtKB"/>
</dbReference>
<dbReference type="GO" id="GO:0045893">
    <property type="term" value="P:positive regulation of DNA-templated transcription"/>
    <property type="evidence" value="ECO:0000314"/>
    <property type="project" value="UniProtKB"/>
</dbReference>
<dbReference type="GO" id="GO:0051446">
    <property type="term" value="P:positive regulation of meiotic cell cycle"/>
    <property type="evidence" value="ECO:0000315"/>
    <property type="project" value="TAIR"/>
</dbReference>
<dbReference type="GO" id="GO:0051726">
    <property type="term" value="P:regulation of cell cycle"/>
    <property type="evidence" value="ECO:0000315"/>
    <property type="project" value="TAIR"/>
</dbReference>
<dbReference type="GO" id="GO:0051302">
    <property type="term" value="P:regulation of cell division"/>
    <property type="evidence" value="ECO:0000315"/>
    <property type="project" value="TAIR"/>
</dbReference>
<dbReference type="GO" id="GO:0006357">
    <property type="term" value="P:regulation of transcription by RNA polymerase II"/>
    <property type="evidence" value="ECO:0007669"/>
    <property type="project" value="InterPro"/>
</dbReference>
<dbReference type="GO" id="GO:0009733">
    <property type="term" value="P:response to auxin"/>
    <property type="evidence" value="ECO:0000270"/>
    <property type="project" value="TAIR"/>
</dbReference>
<dbReference type="GO" id="GO:0010090">
    <property type="term" value="P:trichome morphogenesis"/>
    <property type="evidence" value="ECO:0000315"/>
    <property type="project" value="TAIR"/>
</dbReference>
<dbReference type="CDD" id="cd14660">
    <property type="entry name" value="E2F_DD"/>
    <property type="match status" value="1"/>
</dbReference>
<dbReference type="FunFam" id="1.10.10.10:FF:000008">
    <property type="entry name" value="E2F transcription factor 1"/>
    <property type="match status" value="1"/>
</dbReference>
<dbReference type="Gene3D" id="6.10.250.540">
    <property type="match status" value="1"/>
</dbReference>
<dbReference type="Gene3D" id="1.10.10.10">
    <property type="entry name" value="Winged helix-like DNA-binding domain superfamily/Winged helix DNA-binding domain"/>
    <property type="match status" value="1"/>
</dbReference>
<dbReference type="InterPro" id="IPR015633">
    <property type="entry name" value="E2F"/>
</dbReference>
<dbReference type="InterPro" id="IPR037241">
    <property type="entry name" value="E2F-DP_heterodim"/>
</dbReference>
<dbReference type="InterPro" id="IPR032198">
    <property type="entry name" value="E2F_CC-MB"/>
</dbReference>
<dbReference type="InterPro" id="IPR003316">
    <property type="entry name" value="E2F_WHTH_DNA-bd_dom"/>
</dbReference>
<dbReference type="InterPro" id="IPR036388">
    <property type="entry name" value="WH-like_DNA-bd_sf"/>
</dbReference>
<dbReference type="InterPro" id="IPR036390">
    <property type="entry name" value="WH_DNA-bd_sf"/>
</dbReference>
<dbReference type="PANTHER" id="PTHR12081">
    <property type="entry name" value="TRANSCRIPTION FACTOR E2F"/>
    <property type="match status" value="1"/>
</dbReference>
<dbReference type="PANTHER" id="PTHR12081:SF109">
    <property type="entry name" value="TRANSCRIPTION FACTOR E2FB"/>
    <property type="match status" value="1"/>
</dbReference>
<dbReference type="Pfam" id="PF16421">
    <property type="entry name" value="E2F_CC-MB"/>
    <property type="match status" value="1"/>
</dbReference>
<dbReference type="Pfam" id="PF02319">
    <property type="entry name" value="E2F_TDP"/>
    <property type="match status" value="1"/>
</dbReference>
<dbReference type="SMART" id="SM01372">
    <property type="entry name" value="E2F_TDP"/>
    <property type="match status" value="1"/>
</dbReference>
<dbReference type="SUPFAM" id="SSF144074">
    <property type="entry name" value="E2F-DP heterodimerization region"/>
    <property type="match status" value="1"/>
</dbReference>
<dbReference type="SUPFAM" id="SSF46785">
    <property type="entry name" value="Winged helix' DNA-binding domain"/>
    <property type="match status" value="1"/>
</dbReference>
<protein>
    <recommendedName>
        <fullName>Transcription factor E2FB</fullName>
    </recommendedName>
    <alternativeName>
        <fullName>E2F transcription factor-1</fullName>
        <shortName>AtE2F1</shortName>
    </alternativeName>
</protein>
<feature type="chain" id="PRO_0000406290" description="Transcription factor E2FB">
    <location>
        <begin position="1"/>
        <end position="469"/>
    </location>
</feature>
<feature type="DNA-binding region" evidence="1">
    <location>
        <begin position="129"/>
        <end position="194"/>
    </location>
</feature>
<feature type="region of interest" description="Disordered" evidence="2">
    <location>
        <begin position="1"/>
        <end position="28"/>
    </location>
</feature>
<feature type="region of interest" description="Disordered" evidence="2">
    <location>
        <begin position="84"/>
        <end position="118"/>
    </location>
</feature>
<feature type="region of interest" description="Leucine-zipper" evidence="1">
    <location>
        <begin position="210"/>
        <end position="238"/>
    </location>
</feature>
<feature type="region of interest" description="Disordered" evidence="2">
    <location>
        <begin position="319"/>
        <end position="374"/>
    </location>
</feature>
<feature type="region of interest" description="Retinoblastoma protein binding" evidence="1">
    <location>
        <begin position="403"/>
        <end position="419"/>
    </location>
</feature>
<feature type="region of interest" description="Disordered" evidence="2">
    <location>
        <begin position="426"/>
        <end position="469"/>
    </location>
</feature>
<feature type="coiled-coil region" evidence="1">
    <location>
        <begin position="202"/>
        <end position="246"/>
    </location>
</feature>
<feature type="compositionally biased region" description="Polar residues" evidence="2">
    <location>
        <begin position="8"/>
        <end position="22"/>
    </location>
</feature>
<feature type="compositionally biased region" description="Polar residues" evidence="2">
    <location>
        <begin position="100"/>
        <end position="118"/>
    </location>
</feature>
<feature type="compositionally biased region" description="Basic and acidic residues" evidence="2">
    <location>
        <begin position="349"/>
        <end position="374"/>
    </location>
</feature>
<feature type="compositionally biased region" description="Low complexity" evidence="2">
    <location>
        <begin position="447"/>
        <end position="469"/>
    </location>
</feature>
<feature type="splice variant" id="VSP_040804" description="In isoform 2." evidence="13">
    <original>SGPD</original>
    <variation>Y</variation>
    <location>
        <begin position="423"/>
        <end position="426"/>
    </location>
</feature>
<feature type="sequence conflict" description="In Ref. 1; CAC15485." evidence="13" ref="1">
    <original>V</original>
    <variation>E</variation>
    <location>
        <position position="337"/>
    </location>
</feature>
<comment type="function">
    <text evidence="4 5 6 7 8 9 10">Transcription activator that binds DNA cooperatively with DP proteins through the E2 recognition site, 5'-TTTC[CG]CGC-3' found in the promoter region of a number of genes whose products are involved in cell cycle regulation or in DNA replication. The binding of retinoblastoma-related proteins represses transactivation. Involved in the control of cell-cycle progression from G1 to S phase and from G2 to M phase. Stimulates cell proliferation and delays differentiation. Represses cell enlargement and endoreduplication in auxin-free conditions.</text>
</comment>
<comment type="subunit">
    <text evidence="3 4 5 6 7 9 12">Heterodimer with DP proteins. Interacts (via dimerization domain) preferentially with DPA, but also with DPB. Interacts with PURA1 and retinoblastoma-related protein RBR1. Component of a DREAM-like complex which modulates a variety of developmentally regulated genes and of the mitotic genes in proliferating and differentiated cells. Interacts with MYB3R4 only at early stages of leaves development (PubMed:26069325).</text>
</comment>
<comment type="interaction">
    <interactant intactId="EBI-1774719">
        <id>Q9FV71</id>
    </interactant>
    <interactant intactId="EBI-8107038">
        <id>P42818</id>
        <label>ATPK1</label>
    </interactant>
    <organismsDiffer>false</organismsDiffer>
    <experiments>3</experiments>
</comment>
<comment type="interaction">
    <interactant intactId="EBI-1774719">
        <id>Q9FV71</id>
    </interactant>
    <interactant intactId="EBI-1774763">
        <id>Q9FNY3</id>
        <label>DPA</label>
    </interactant>
    <organismsDiffer>false</organismsDiffer>
    <experiments>10</experiments>
</comment>
<comment type="interaction">
    <interactant intactId="EBI-1774719">
        <id>Q9FV71</id>
    </interactant>
    <interactant intactId="EBI-1774876">
        <id>Q9FNY2</id>
        <label>DPB</label>
    </interactant>
    <organismsDiffer>false</organismsDiffer>
    <experiments>6</experiments>
</comment>
<comment type="interaction">
    <interactant intactId="EBI-1774719">
        <id>Q9FV71</id>
    </interactant>
    <interactant intactId="EBI-398590">
        <id>Q9LKZ3</id>
        <label>RBR1</label>
    </interactant>
    <organismsDiffer>false</organismsDiffer>
    <experiments>4</experiments>
</comment>
<comment type="subcellular location">
    <subcellularLocation>
        <location>Cytoplasm</location>
    </subcellularLocation>
    <subcellularLocation>
        <location>Nucleus</location>
    </subcellularLocation>
    <text>Interaction with DPA induces an exclusive nuclear localization, but an interaction with DPB has no effect.</text>
</comment>
<comment type="alternative products">
    <event type="alternative splicing"/>
    <isoform>
        <id>Q9FV71-1</id>
        <name>1</name>
        <sequence type="displayed"/>
    </isoform>
    <isoform>
        <id>Q9FV71-2</id>
        <name>2</name>
        <sequence type="described" ref="VSP_040804"/>
    </isoform>
</comment>
<comment type="tissue specificity">
    <text evidence="10">Expressed in proliferating cells and several differentiated tissues. Detected in inflorescence and shoot apical meristems, cotyledonary vascular tissues, leaf primordia, young leaves, base of trichomes, central cylinder and elongation zone of roots, lateral root primordia, flowers, pistils of immature flowers and pollen grains.</text>
</comment>
<comment type="developmental stage">
    <text evidence="4 5 10">Expressed in a cell cycle-dependent manner. Most abundant at the G1/S transition. Lower but constant level in the following phases.</text>
</comment>
<comment type="induction">
    <text evidence="9 10 11">Up-regulated by light and by auxin. May be up-regulated by E2FA.</text>
</comment>
<comment type="PTM">
    <text evidence="9">Phosphorylated.</text>
</comment>
<comment type="similarity">
    <text evidence="13">Belongs to the E2F/DP family.</text>
</comment>
<comment type="sequence caution" evidence="13">
    <conflict type="erroneous gene model prediction">
        <sequence resource="EMBL-CDS" id="BAB17029"/>
    </conflict>
</comment>
<accession>Q9FV71</accession>
<accession>Q9FMS8</accession>
<accession>Q9FNY1</accession>
<keyword id="KW-0010">Activator</keyword>
<keyword id="KW-0025">Alternative splicing</keyword>
<keyword id="KW-0131">Cell cycle</keyword>
<keyword id="KW-0175">Coiled coil</keyword>
<keyword id="KW-0963">Cytoplasm</keyword>
<keyword id="KW-0238">DNA-binding</keyword>
<keyword id="KW-0539">Nucleus</keyword>
<keyword id="KW-1185">Reference proteome</keyword>
<keyword id="KW-0804">Transcription</keyword>
<keyword id="KW-0805">Transcription regulation</keyword>
<evidence type="ECO:0000255" key="1"/>
<evidence type="ECO:0000256" key="2">
    <source>
        <dbReference type="SAM" id="MobiDB-lite"/>
    </source>
</evidence>
<evidence type="ECO:0000269" key="3">
    <source>
    </source>
</evidence>
<evidence type="ECO:0000269" key="4">
    <source>
    </source>
</evidence>
<evidence type="ECO:0000269" key="5">
    <source>
    </source>
</evidence>
<evidence type="ECO:0000269" key="6">
    <source>
    </source>
</evidence>
<evidence type="ECO:0000269" key="7">
    <source>
    </source>
</evidence>
<evidence type="ECO:0000269" key="8">
    <source>
    </source>
</evidence>
<evidence type="ECO:0000269" key="9">
    <source>
    </source>
</evidence>
<evidence type="ECO:0000269" key="10">
    <source>
    </source>
</evidence>
<evidence type="ECO:0000269" key="11">
    <source>
    </source>
</evidence>
<evidence type="ECO:0000269" key="12">
    <source>
    </source>
</evidence>
<evidence type="ECO:0000305" key="13"/>